<protein>
    <recommendedName>
        <fullName evidence="1">Neuraminidase</fullName>
        <ecNumber evidence="1">3.2.1.18</ecNumber>
    </recommendedName>
</protein>
<organism>
    <name type="scientific">Influenza A virus (strain A/Leningrad/134/17/1957 H2N2)</name>
    <dbReference type="NCBI Taxonomy" id="380984"/>
    <lineage>
        <taxon>Viruses</taxon>
        <taxon>Riboviria</taxon>
        <taxon>Orthornavirae</taxon>
        <taxon>Negarnaviricota</taxon>
        <taxon>Polyploviricotina</taxon>
        <taxon>Insthoviricetes</taxon>
        <taxon>Articulavirales</taxon>
        <taxon>Orthomyxoviridae</taxon>
        <taxon>Alphainfluenzavirus</taxon>
        <taxon>Alphainfluenzavirus influenzae</taxon>
        <taxon>Influenza A virus</taxon>
    </lineage>
</organism>
<organismHost>
    <name type="scientific">Aves</name>
    <dbReference type="NCBI Taxonomy" id="8782"/>
</organismHost>
<organismHost>
    <name type="scientific">Homo sapiens</name>
    <name type="common">Human</name>
    <dbReference type="NCBI Taxonomy" id="9606"/>
</organismHost>
<proteinExistence type="inferred from homology"/>
<name>NRAM_I57A2</name>
<feature type="chain" id="PRO_5000142623" description="Neuraminidase">
    <location>
        <begin position="1"/>
        <end position="469"/>
    </location>
</feature>
<feature type="topological domain" description="Intravirion" evidence="1">
    <location>
        <begin position="1"/>
        <end position="6"/>
    </location>
</feature>
<feature type="transmembrane region" description="Helical" evidence="1">
    <location>
        <begin position="7"/>
        <end position="29"/>
    </location>
</feature>
<feature type="topological domain" description="Virion surface" evidence="1">
    <location>
        <begin position="30"/>
        <end position="469"/>
    </location>
</feature>
<feature type="region of interest" description="Involved in apical transport and lipid raft association" evidence="1">
    <location>
        <begin position="11"/>
        <end position="33"/>
    </location>
</feature>
<feature type="region of interest" description="Hypervariable stalk region" evidence="1">
    <location>
        <begin position="36"/>
        <end position="88"/>
    </location>
</feature>
<feature type="region of interest" description="Head of neuraminidase" evidence="1">
    <location>
        <begin position="91"/>
        <end position="469"/>
    </location>
</feature>
<feature type="region of interest" description="Disordered" evidence="2">
    <location>
        <begin position="325"/>
        <end position="349"/>
    </location>
</feature>
<feature type="active site" description="Proton donor/acceptor" evidence="1">
    <location>
        <position position="151"/>
    </location>
</feature>
<feature type="active site" description="Nucleophile" evidence="1">
    <location>
        <position position="406"/>
    </location>
</feature>
<feature type="binding site" evidence="1">
    <location>
        <position position="118"/>
    </location>
    <ligand>
        <name>substrate</name>
    </ligand>
</feature>
<feature type="binding site" evidence="1">
    <location>
        <position position="152"/>
    </location>
    <ligand>
        <name>substrate</name>
    </ligand>
</feature>
<feature type="binding site" evidence="1">
    <location>
        <begin position="276"/>
        <end position="277"/>
    </location>
    <ligand>
        <name>substrate</name>
    </ligand>
</feature>
<feature type="binding site" evidence="1">
    <location>
        <position position="292"/>
    </location>
    <ligand>
        <name>substrate</name>
    </ligand>
</feature>
<feature type="binding site" evidence="1">
    <location>
        <position position="293"/>
    </location>
    <ligand>
        <name>Ca(2+)</name>
        <dbReference type="ChEBI" id="CHEBI:29108"/>
    </ligand>
</feature>
<feature type="binding site" evidence="1">
    <location>
        <position position="297"/>
    </location>
    <ligand>
        <name>Ca(2+)</name>
        <dbReference type="ChEBI" id="CHEBI:29108"/>
    </ligand>
</feature>
<feature type="binding site" evidence="1">
    <location>
        <position position="324"/>
    </location>
    <ligand>
        <name>Ca(2+)</name>
        <dbReference type="ChEBI" id="CHEBI:29108"/>
    </ligand>
</feature>
<feature type="binding site" evidence="1">
    <location>
        <position position="371"/>
    </location>
    <ligand>
        <name>substrate</name>
    </ligand>
</feature>
<feature type="glycosylation site" description="N-linked (GlcNAc...) asparagine; by host" evidence="1">
    <location>
        <position position="61"/>
    </location>
</feature>
<feature type="glycosylation site" description="N-linked (GlcNAc...) asparagine; by host" evidence="1">
    <location>
        <position position="69"/>
    </location>
</feature>
<feature type="glycosylation site" description="N-linked (GlcNAc...) asparagine; by host" evidence="1">
    <location>
        <position position="70"/>
    </location>
</feature>
<feature type="glycosylation site" description="N-linked (GlcNAc...) asparagine; by host" evidence="1">
    <location>
        <position position="86"/>
    </location>
</feature>
<feature type="glycosylation site" description="N-linked (GlcNAc...) asparagine; by host" evidence="1">
    <location>
        <position position="146"/>
    </location>
</feature>
<feature type="glycosylation site" description="N-linked (GlcNAc...) asparagine; by host" evidence="1">
    <location>
        <position position="200"/>
    </location>
</feature>
<feature type="glycosylation site" description="N-linked (GlcNAc...) asparagine; by host" evidence="1">
    <location>
        <position position="234"/>
    </location>
</feature>
<feature type="glycosylation site" description="N-linked (GlcNAc...) asparagine; by host" evidence="1">
    <location>
        <position position="402"/>
    </location>
</feature>
<feature type="disulfide bond" evidence="1">
    <location>
        <begin position="92"/>
        <end position="417"/>
    </location>
</feature>
<feature type="disulfide bond" evidence="1">
    <location>
        <begin position="124"/>
        <end position="129"/>
    </location>
</feature>
<feature type="disulfide bond" evidence="1">
    <location>
        <begin position="183"/>
        <end position="230"/>
    </location>
</feature>
<feature type="disulfide bond" evidence="1">
    <location>
        <begin position="232"/>
        <end position="237"/>
    </location>
</feature>
<feature type="disulfide bond" evidence="1">
    <location>
        <begin position="278"/>
        <end position="291"/>
    </location>
</feature>
<feature type="disulfide bond" evidence="1">
    <location>
        <begin position="280"/>
        <end position="289"/>
    </location>
</feature>
<feature type="disulfide bond" evidence="1">
    <location>
        <begin position="318"/>
        <end position="337"/>
    </location>
</feature>
<feature type="disulfide bond" evidence="1">
    <location>
        <begin position="421"/>
        <end position="447"/>
    </location>
</feature>
<gene>
    <name evidence="1" type="primary">NA</name>
</gene>
<sequence length="469" mass="51916">MNPNQKIITIGSVSLTIATVCSLMQIAILATTVTLHFKQHECDSPASNQVMPCEPIIIERNITEIVYLNNTTIEKEICPEVVEYRNWSKPQCQITGFAPFSKDNSIRLSAGGDIWVTREPYVSCDPGKCYQFALGQGTTLDNKHSNGTIHDRIPHRTLLMNELGVPFHLGTKQVCVAWSSSSCHDGKAWLHVCVTGDDRNATASFIYDGRLVDSIGSWSQNILRTQESECVCINGTCTVVMTDGSASGRADTRILFIKEGKIVHISPLSGSAQHIEECSCYPRYPDVRCICRDNWKGSNRPVIDINMEDYSIDSSYVCSGLVGDTPRNDDSSSNSNCRDPNNERGNPGVKGWAFDNGDDVWMGRTISKDSRSGYETFKVIGGWSTPNSKSQVNRQVIVDNNNWSGYSGIFSVEGKSCINRCFYVELIRGRPQETRVWWTSNSIVVFCGTSGTYGTGSWPDGANINFMPI</sequence>
<comment type="function">
    <text evidence="1">Catalyzes the removal of terminal sialic acid residues from viral and cellular glycoconjugates. Cleaves off the terminal sialic acids on the glycosylated HA during virus budding to facilitate virus release. Additionally helps virus spread through the circulation by further removing sialic acids from the cell surface. These cleavages prevent self-aggregation and ensure the efficient spread of the progeny virus from cell to cell. Otherwise, infection would be limited to one round of replication. Described as a receptor-destroying enzyme because it cleaves a terminal sialic acid from the cellular receptors. May facilitate viral invasion of the upper airways by cleaving the sialic acid moieties on the mucin of the airway epithelial cells. Likely to plays a role in the budding process through its association with lipid rafts during intracellular transport. May additionally display a raft-association independent effect on budding. Plays a role in the determination of host range restriction on replication and virulence. Sialidase activity in late endosome/lysosome traffic seems to enhance virus replication.</text>
</comment>
<comment type="catalytic activity">
    <reaction evidence="1">
        <text>Hydrolysis of alpha-(2-&gt;3)-, alpha-(2-&gt;6)-, alpha-(2-&gt;8)- glycosidic linkages of terminal sialic acid residues in oligosaccharides, glycoproteins, glycolipids, colominic acid and synthetic substrates.</text>
        <dbReference type="EC" id="3.2.1.18"/>
    </reaction>
</comment>
<comment type="cofactor">
    <cofactor evidence="1">
        <name>Ca(2+)</name>
        <dbReference type="ChEBI" id="CHEBI:29108"/>
    </cofactor>
</comment>
<comment type="activity regulation">
    <text evidence="1">Inhibited by the neuraminidase inhibitors zanamivir (Relenza) and oseltamivir (Tamiflu). These drugs interfere with the release of progeny virus from infected cells and are effective against all influenza strains. Resistance to neuraminidase inhibitors is quite rare.</text>
</comment>
<comment type="subunit">
    <text evidence="1">Homotetramer.</text>
</comment>
<comment type="subcellular location">
    <subcellularLocation>
        <location evidence="1">Virion membrane</location>
    </subcellularLocation>
    <subcellularLocation>
        <location evidence="1">Host apical cell membrane</location>
        <topology evidence="1">Single-pass type II membrane protein</topology>
    </subcellularLocation>
    <text evidence="1">Preferentially accumulates at the apical plasma membrane in infected polarized epithelial cells, which is the virus assembly site. Uses lipid rafts for cell surface transport and apical sorting. In the virion, forms a mushroom-shaped spike on the surface of the membrane.</text>
</comment>
<comment type="domain">
    <text evidence="1">Intact N-terminus is essential for virion morphogenesis. Possesses two apical sorting signals, one in the ectodomain, which is likely to be a glycan, and the other in the transmembrane domain. The transmembrane domain also plays a role in lipid raft association.</text>
</comment>
<comment type="PTM">
    <text evidence="1">N-glycosylated.</text>
</comment>
<comment type="miscellaneous">
    <text>The influenza A genome consist of 8 RNA segments. Genetic variation of hemagglutinin and/or neuraminidase genes results in the emergence of new influenza strains. The mechanism of variation can be the result of point mutations or the result of genetic reassortment between segments of two different strains.</text>
</comment>
<comment type="similarity">
    <text evidence="1">Belongs to the glycosyl hydrolase 34 family.</text>
</comment>
<keyword id="KW-0106">Calcium</keyword>
<keyword id="KW-1015">Disulfide bond</keyword>
<keyword id="KW-0325">Glycoprotein</keyword>
<keyword id="KW-0326">Glycosidase</keyword>
<keyword id="KW-1032">Host cell membrane</keyword>
<keyword id="KW-1043">Host membrane</keyword>
<keyword id="KW-0378">Hydrolase</keyword>
<keyword id="KW-0472">Membrane</keyword>
<keyword id="KW-0479">Metal-binding</keyword>
<keyword id="KW-0735">Signal-anchor</keyword>
<keyword id="KW-0812">Transmembrane</keyword>
<keyword id="KW-1133">Transmembrane helix</keyword>
<keyword id="KW-0946">Virion</keyword>
<dbReference type="EC" id="3.2.1.18" evidence="1"/>
<dbReference type="EMBL" id="L37331">
    <property type="protein sequence ID" value="AAA96711.1"/>
    <property type="molecule type" value="Genomic_RNA"/>
</dbReference>
<dbReference type="SMR" id="Q67214"/>
<dbReference type="GlyCosmos" id="Q67214">
    <property type="glycosylation" value="8 sites, No reported glycans"/>
</dbReference>
<dbReference type="GO" id="GO:0020002">
    <property type="term" value="C:host cell plasma membrane"/>
    <property type="evidence" value="ECO:0007669"/>
    <property type="project" value="UniProtKB-SubCell"/>
</dbReference>
<dbReference type="GO" id="GO:0016020">
    <property type="term" value="C:membrane"/>
    <property type="evidence" value="ECO:0007669"/>
    <property type="project" value="UniProtKB-UniRule"/>
</dbReference>
<dbReference type="GO" id="GO:0055036">
    <property type="term" value="C:virion membrane"/>
    <property type="evidence" value="ECO:0007669"/>
    <property type="project" value="UniProtKB-SubCell"/>
</dbReference>
<dbReference type="GO" id="GO:0004308">
    <property type="term" value="F:exo-alpha-sialidase activity"/>
    <property type="evidence" value="ECO:0007669"/>
    <property type="project" value="UniProtKB-UniRule"/>
</dbReference>
<dbReference type="GO" id="GO:0046872">
    <property type="term" value="F:metal ion binding"/>
    <property type="evidence" value="ECO:0007669"/>
    <property type="project" value="UniProtKB-UniRule"/>
</dbReference>
<dbReference type="GO" id="GO:0005975">
    <property type="term" value="P:carbohydrate metabolic process"/>
    <property type="evidence" value="ECO:0007669"/>
    <property type="project" value="InterPro"/>
</dbReference>
<dbReference type="GO" id="GO:0046761">
    <property type="term" value="P:viral budding from plasma membrane"/>
    <property type="evidence" value="ECO:0007669"/>
    <property type="project" value="UniProtKB-UniRule"/>
</dbReference>
<dbReference type="CDD" id="cd15483">
    <property type="entry name" value="Influenza_NA"/>
    <property type="match status" value="1"/>
</dbReference>
<dbReference type="Gene3D" id="2.120.10.10">
    <property type="match status" value="1"/>
</dbReference>
<dbReference type="HAMAP" id="MF_04071">
    <property type="entry name" value="INFV_NRAM"/>
    <property type="match status" value="1"/>
</dbReference>
<dbReference type="InterPro" id="IPR001860">
    <property type="entry name" value="Glyco_hydro_34"/>
</dbReference>
<dbReference type="InterPro" id="IPR033654">
    <property type="entry name" value="Sialidase_Influenza_A/B"/>
</dbReference>
<dbReference type="InterPro" id="IPR036278">
    <property type="entry name" value="Sialidase_sf"/>
</dbReference>
<dbReference type="Pfam" id="PF00064">
    <property type="entry name" value="Neur"/>
    <property type="match status" value="1"/>
</dbReference>
<dbReference type="SUPFAM" id="SSF50939">
    <property type="entry name" value="Sialidases"/>
    <property type="match status" value="1"/>
</dbReference>
<evidence type="ECO:0000255" key="1">
    <source>
        <dbReference type="HAMAP-Rule" id="MF_04071"/>
    </source>
</evidence>
<evidence type="ECO:0000256" key="2">
    <source>
        <dbReference type="SAM" id="MobiDB-lite"/>
    </source>
</evidence>
<reference key="1">
    <citation type="journal article" date="1995" name="Virus Genes">
        <title>Nucleotide sequences of the neuraminidase genes of influenza A/Leningrad/134/57 (H2N2) virus and two of its live, attenuated, cold-adapted variants.</title>
        <authorList>
            <person name="Klimov A.I."/>
            <person name="Romanova J.R."/>
            <person name="Egorov A.Y."/>
            <person name="Lukashok I.V."/>
            <person name="Kiseleva I.V."/>
            <person name="Alexandrova G.I."/>
            <person name="Cox N.J."/>
        </authorList>
    </citation>
    <scope>NUCLEOTIDE SEQUENCE [GENOMIC RNA]</scope>
</reference>
<reference key="2">
    <citation type="journal article" date="2004" name="Virus Res.">
        <title>Assembly and budding of influenza virus.</title>
        <authorList>
            <person name="Nayak D.P."/>
            <person name="Hui E.K."/>
            <person name="Barman S."/>
        </authorList>
    </citation>
    <scope>REVIEW</scope>
</reference>
<reference key="3">
    <citation type="journal article" date="2005" name="N. Engl. J. Med.">
        <title>Neuraminidase inhibitors for influenza.</title>
        <authorList>
            <person name="Moscona A."/>
        </authorList>
    </citation>
    <scope>REVIEW</scope>
</reference>
<reference key="4">
    <citation type="journal article" date="2005" name="Biol. Pharm. Bull.">
        <title>Sialobiology of influenza: molecular mechanism of host range variation of influenza viruses.</title>
        <authorList>
            <person name="Suzuki Y."/>
        </authorList>
    </citation>
    <scope>REVIEW</scope>
</reference>
<accession>Q67214</accession>